<reference key="1">
    <citation type="journal article" date="2009" name="PLoS ONE">
        <title>Complete genome sequence of the aerobic CO-oxidizing thermophile Thermomicrobium roseum.</title>
        <authorList>
            <person name="Wu D."/>
            <person name="Raymond J."/>
            <person name="Wu M."/>
            <person name="Chatterji S."/>
            <person name="Ren Q."/>
            <person name="Graham J.E."/>
            <person name="Bryant D.A."/>
            <person name="Robb F."/>
            <person name="Colman A."/>
            <person name="Tallon L.J."/>
            <person name="Badger J.H."/>
            <person name="Madupu R."/>
            <person name="Ward N.L."/>
            <person name="Eisen J.A."/>
        </authorList>
    </citation>
    <scope>NUCLEOTIDE SEQUENCE [LARGE SCALE GENOMIC DNA]</scope>
    <source>
        <strain>ATCC 27502 / DSM 5159 / P-2</strain>
    </source>
</reference>
<sequence>MGRSSKKGPYIDPKLKKKIDELNRTGERRVIRTWARDCTIFPEMVGHTIAVHDGRRHVPIYITEQMVGHKLGEFAPTRTYRGHGKDAERTTRRR</sequence>
<evidence type="ECO:0000255" key="1">
    <source>
        <dbReference type="HAMAP-Rule" id="MF_00531"/>
    </source>
</evidence>
<evidence type="ECO:0000256" key="2">
    <source>
        <dbReference type="SAM" id="MobiDB-lite"/>
    </source>
</evidence>
<evidence type="ECO:0000305" key="3"/>
<gene>
    <name evidence="1" type="primary">rpsS</name>
    <name type="ordered locus">trd_0980</name>
</gene>
<accession>B9KZY3</accession>
<keyword id="KW-1185">Reference proteome</keyword>
<keyword id="KW-0687">Ribonucleoprotein</keyword>
<keyword id="KW-0689">Ribosomal protein</keyword>
<keyword id="KW-0694">RNA-binding</keyword>
<keyword id="KW-0699">rRNA-binding</keyword>
<organism>
    <name type="scientific">Thermomicrobium roseum (strain ATCC 27502 / DSM 5159 / P-2)</name>
    <dbReference type="NCBI Taxonomy" id="309801"/>
    <lineage>
        <taxon>Bacteria</taxon>
        <taxon>Pseudomonadati</taxon>
        <taxon>Thermomicrobiota</taxon>
        <taxon>Thermomicrobia</taxon>
        <taxon>Thermomicrobiales</taxon>
        <taxon>Thermomicrobiaceae</taxon>
        <taxon>Thermomicrobium</taxon>
    </lineage>
</organism>
<comment type="function">
    <text evidence="1">Protein S19 forms a complex with S13 that binds strongly to the 16S ribosomal RNA.</text>
</comment>
<comment type="similarity">
    <text evidence="1">Belongs to the universal ribosomal protein uS19 family.</text>
</comment>
<dbReference type="EMBL" id="CP001275">
    <property type="protein sequence ID" value="ACM06150.1"/>
    <property type="molecule type" value="Genomic_DNA"/>
</dbReference>
<dbReference type="RefSeq" id="WP_015921944.1">
    <property type="nucleotide sequence ID" value="NC_011959.1"/>
</dbReference>
<dbReference type="SMR" id="B9KZY3"/>
<dbReference type="STRING" id="309801.trd_0980"/>
<dbReference type="KEGG" id="tro:trd_0980"/>
<dbReference type="eggNOG" id="COG0185">
    <property type="taxonomic scope" value="Bacteria"/>
</dbReference>
<dbReference type="HOGENOM" id="CLU_144911_0_1_0"/>
<dbReference type="OrthoDB" id="9797833at2"/>
<dbReference type="Proteomes" id="UP000000447">
    <property type="component" value="Chromosome"/>
</dbReference>
<dbReference type="GO" id="GO:0005737">
    <property type="term" value="C:cytoplasm"/>
    <property type="evidence" value="ECO:0007669"/>
    <property type="project" value="UniProtKB-ARBA"/>
</dbReference>
<dbReference type="GO" id="GO:0015935">
    <property type="term" value="C:small ribosomal subunit"/>
    <property type="evidence" value="ECO:0007669"/>
    <property type="project" value="InterPro"/>
</dbReference>
<dbReference type="GO" id="GO:0019843">
    <property type="term" value="F:rRNA binding"/>
    <property type="evidence" value="ECO:0007669"/>
    <property type="project" value="UniProtKB-UniRule"/>
</dbReference>
<dbReference type="GO" id="GO:0003735">
    <property type="term" value="F:structural constituent of ribosome"/>
    <property type="evidence" value="ECO:0007669"/>
    <property type="project" value="InterPro"/>
</dbReference>
<dbReference type="GO" id="GO:0000028">
    <property type="term" value="P:ribosomal small subunit assembly"/>
    <property type="evidence" value="ECO:0007669"/>
    <property type="project" value="TreeGrafter"/>
</dbReference>
<dbReference type="GO" id="GO:0006412">
    <property type="term" value="P:translation"/>
    <property type="evidence" value="ECO:0007669"/>
    <property type="project" value="UniProtKB-UniRule"/>
</dbReference>
<dbReference type="FunFam" id="3.30.860.10:FF:000001">
    <property type="entry name" value="30S ribosomal protein S19"/>
    <property type="match status" value="1"/>
</dbReference>
<dbReference type="Gene3D" id="3.30.860.10">
    <property type="entry name" value="30s Ribosomal Protein S19, Chain A"/>
    <property type="match status" value="1"/>
</dbReference>
<dbReference type="HAMAP" id="MF_00531">
    <property type="entry name" value="Ribosomal_uS19"/>
    <property type="match status" value="1"/>
</dbReference>
<dbReference type="InterPro" id="IPR002222">
    <property type="entry name" value="Ribosomal_uS19"/>
</dbReference>
<dbReference type="InterPro" id="IPR005732">
    <property type="entry name" value="Ribosomal_uS19_bac-type"/>
</dbReference>
<dbReference type="InterPro" id="IPR020934">
    <property type="entry name" value="Ribosomal_uS19_CS"/>
</dbReference>
<dbReference type="InterPro" id="IPR023575">
    <property type="entry name" value="Ribosomal_uS19_SF"/>
</dbReference>
<dbReference type="NCBIfam" id="TIGR01050">
    <property type="entry name" value="rpsS_bact"/>
    <property type="match status" value="1"/>
</dbReference>
<dbReference type="PANTHER" id="PTHR11880">
    <property type="entry name" value="RIBOSOMAL PROTEIN S19P FAMILY MEMBER"/>
    <property type="match status" value="1"/>
</dbReference>
<dbReference type="PANTHER" id="PTHR11880:SF8">
    <property type="entry name" value="SMALL RIBOSOMAL SUBUNIT PROTEIN US19M"/>
    <property type="match status" value="1"/>
</dbReference>
<dbReference type="Pfam" id="PF00203">
    <property type="entry name" value="Ribosomal_S19"/>
    <property type="match status" value="1"/>
</dbReference>
<dbReference type="PIRSF" id="PIRSF002144">
    <property type="entry name" value="Ribosomal_S19"/>
    <property type="match status" value="1"/>
</dbReference>
<dbReference type="PRINTS" id="PR00975">
    <property type="entry name" value="RIBOSOMALS19"/>
</dbReference>
<dbReference type="SUPFAM" id="SSF54570">
    <property type="entry name" value="Ribosomal protein S19"/>
    <property type="match status" value="1"/>
</dbReference>
<dbReference type="PROSITE" id="PS00323">
    <property type="entry name" value="RIBOSOMAL_S19"/>
    <property type="match status" value="1"/>
</dbReference>
<feature type="chain" id="PRO_1000146421" description="Small ribosomal subunit protein uS19">
    <location>
        <begin position="1"/>
        <end position="94"/>
    </location>
</feature>
<feature type="region of interest" description="Disordered" evidence="2">
    <location>
        <begin position="73"/>
        <end position="94"/>
    </location>
</feature>
<feature type="compositionally biased region" description="Basic and acidic residues" evidence="2">
    <location>
        <begin position="83"/>
        <end position="94"/>
    </location>
</feature>
<name>RS19_THERP</name>
<protein>
    <recommendedName>
        <fullName evidence="1">Small ribosomal subunit protein uS19</fullName>
    </recommendedName>
    <alternativeName>
        <fullName evidence="3">30S ribosomal protein S19</fullName>
    </alternativeName>
</protein>
<proteinExistence type="inferred from homology"/>